<comment type="function">
    <text evidence="1">Transglycosidase operating by a ping-pong reaction mechanism. Involved in the synthesis of raffinose, a major soluble carbohydrate in seeds, roots and tubers (By similarity).</text>
</comment>
<comment type="catalytic activity">
    <reaction>
        <text>alpha-D-galactosyl-(1-&gt;3)-1D-myo-inositol + sucrose = raffinose + myo-inositol</text>
        <dbReference type="Rhea" id="RHEA:20161"/>
        <dbReference type="ChEBI" id="CHEBI:16634"/>
        <dbReference type="ChEBI" id="CHEBI:17268"/>
        <dbReference type="ChEBI" id="CHEBI:17505"/>
        <dbReference type="ChEBI" id="CHEBI:17992"/>
        <dbReference type="EC" id="2.4.1.82"/>
    </reaction>
</comment>
<comment type="induction">
    <text evidence="3">By oxidative stress.</text>
</comment>
<comment type="similarity">
    <text evidence="4">Belongs to the glycosyl hydrolases 36 family.</text>
</comment>
<comment type="sequence caution" evidence="4">
    <conflict type="erroneous gene model prediction">
        <sequence resource="EMBL-CDS" id="AAD22659"/>
    </conflict>
</comment>
<comment type="sequence caution" evidence="4">
    <conflict type="erroneous gene model prediction">
        <sequence resource="EMBL-CDS" id="CAB80690"/>
    </conflict>
</comment>
<gene>
    <name type="primary">RFS4</name>
    <name type="synonym">RS4</name>
    <name type="ordered locus">At4g01970</name>
    <name type="ORF">T7B11.23</name>
</gene>
<dbReference type="EC" id="2.4.1.82"/>
<dbReference type="EMBL" id="AC007138">
    <property type="protein sequence ID" value="AAD22659.1"/>
    <property type="status" value="ALT_SEQ"/>
    <property type="molecule type" value="Genomic_DNA"/>
</dbReference>
<dbReference type="EMBL" id="AL161493">
    <property type="protein sequence ID" value="CAB80690.1"/>
    <property type="status" value="ALT_SEQ"/>
    <property type="molecule type" value="Genomic_DNA"/>
</dbReference>
<dbReference type="EMBL" id="CP002687">
    <property type="protein sequence ID" value="AEE82106.1"/>
    <property type="molecule type" value="Genomic_DNA"/>
</dbReference>
<dbReference type="EMBL" id="AK229121">
    <property type="protein sequence ID" value="BAF00996.1"/>
    <property type="molecule type" value="mRNA"/>
</dbReference>
<dbReference type="PIR" id="C85025">
    <property type="entry name" value="C85025"/>
</dbReference>
<dbReference type="RefSeq" id="NP_192106.3">
    <property type="nucleotide sequence ID" value="NM_116428.5"/>
</dbReference>
<dbReference type="SMR" id="Q9SYJ4"/>
<dbReference type="FunCoup" id="Q9SYJ4">
    <property type="interactions" value="88"/>
</dbReference>
<dbReference type="STRING" id="3702.Q9SYJ4"/>
<dbReference type="CAZy" id="GH36">
    <property type="family name" value="Glycoside Hydrolase Family 36"/>
</dbReference>
<dbReference type="PaxDb" id="3702-AT4G01970.1"/>
<dbReference type="ProteomicsDB" id="236937"/>
<dbReference type="EnsemblPlants" id="AT4G01970.1">
    <property type="protein sequence ID" value="AT4G01970.1"/>
    <property type="gene ID" value="AT4G01970"/>
</dbReference>
<dbReference type="GeneID" id="828186"/>
<dbReference type="Gramene" id="AT4G01970.1">
    <property type="protein sequence ID" value="AT4G01970.1"/>
    <property type="gene ID" value="AT4G01970"/>
</dbReference>
<dbReference type="KEGG" id="ath:AT4G01970"/>
<dbReference type="Araport" id="AT4G01970"/>
<dbReference type="TAIR" id="AT4G01970">
    <property type="gene designation" value="STS"/>
</dbReference>
<dbReference type="eggNOG" id="ENOG502QTKB">
    <property type="taxonomic scope" value="Eukaryota"/>
</dbReference>
<dbReference type="HOGENOM" id="CLU_007066_0_0_1"/>
<dbReference type="InParanoid" id="Q9SYJ4"/>
<dbReference type="BRENDA" id="2.4.1.82">
    <property type="organism ID" value="399"/>
</dbReference>
<dbReference type="PRO" id="PR:Q9SYJ4"/>
<dbReference type="Proteomes" id="UP000006548">
    <property type="component" value="Chromosome 4"/>
</dbReference>
<dbReference type="ExpressionAtlas" id="Q9SYJ4">
    <property type="expression patterns" value="baseline and differential"/>
</dbReference>
<dbReference type="GO" id="GO:0047268">
    <property type="term" value="F:galactinol-raffinose galactosyltransferase activity"/>
    <property type="evidence" value="ECO:0000314"/>
    <property type="project" value="TAIR"/>
</dbReference>
<dbReference type="GO" id="GO:0047274">
    <property type="term" value="F:galactinol-sucrose galactosyltransferase activity"/>
    <property type="evidence" value="ECO:0007669"/>
    <property type="project" value="UniProtKB-EC"/>
</dbReference>
<dbReference type="GO" id="GO:0006979">
    <property type="term" value="P:response to oxidative stress"/>
    <property type="evidence" value="ECO:0000270"/>
    <property type="project" value="TAIR"/>
</dbReference>
<dbReference type="InterPro" id="IPR017853">
    <property type="entry name" value="Glycoside_hydrolase_SF"/>
</dbReference>
<dbReference type="InterPro" id="IPR008811">
    <property type="entry name" value="Glycosyl_hydrolases_36"/>
</dbReference>
<dbReference type="PANTHER" id="PTHR31268">
    <property type="match status" value="1"/>
</dbReference>
<dbReference type="PANTHER" id="PTHR31268:SF8">
    <property type="entry name" value="GALACTINOL--SUCROSE GALACTOSYLTRANSFERASE 4-RELATED"/>
    <property type="match status" value="1"/>
</dbReference>
<dbReference type="Pfam" id="PF05691">
    <property type="entry name" value="Raffinose_syn"/>
    <property type="match status" value="1"/>
</dbReference>
<dbReference type="SUPFAM" id="SSF51445">
    <property type="entry name" value="(Trans)glycosidases"/>
    <property type="match status" value="1"/>
</dbReference>
<evidence type="ECO:0000250" key="1"/>
<evidence type="ECO:0000250" key="2">
    <source>
        <dbReference type="UniProtKB" id="Q9FND9"/>
    </source>
</evidence>
<evidence type="ECO:0000269" key="3">
    <source>
    </source>
</evidence>
<evidence type="ECO:0000305" key="4"/>
<name>RFS4_ARATH</name>
<reference key="1">
    <citation type="journal article" date="1999" name="Nature">
        <title>Sequence and analysis of chromosome 4 of the plant Arabidopsis thaliana.</title>
        <authorList>
            <person name="Mayer K.F.X."/>
            <person name="Schueller C."/>
            <person name="Wambutt R."/>
            <person name="Murphy G."/>
            <person name="Volckaert G."/>
            <person name="Pohl T."/>
            <person name="Duesterhoeft A."/>
            <person name="Stiekema W."/>
            <person name="Entian K.-D."/>
            <person name="Terryn N."/>
            <person name="Harris B."/>
            <person name="Ansorge W."/>
            <person name="Brandt P."/>
            <person name="Grivell L.A."/>
            <person name="Rieger M."/>
            <person name="Weichselgartner M."/>
            <person name="de Simone V."/>
            <person name="Obermaier B."/>
            <person name="Mache R."/>
            <person name="Mueller M."/>
            <person name="Kreis M."/>
            <person name="Delseny M."/>
            <person name="Puigdomenech P."/>
            <person name="Watson M."/>
            <person name="Schmidtheini T."/>
            <person name="Reichert B."/>
            <person name="Portetelle D."/>
            <person name="Perez-Alonso M."/>
            <person name="Boutry M."/>
            <person name="Bancroft I."/>
            <person name="Vos P."/>
            <person name="Hoheisel J."/>
            <person name="Zimmermann W."/>
            <person name="Wedler H."/>
            <person name="Ridley P."/>
            <person name="Langham S.-A."/>
            <person name="McCullagh B."/>
            <person name="Bilham L."/>
            <person name="Robben J."/>
            <person name="van der Schueren J."/>
            <person name="Grymonprez B."/>
            <person name="Chuang Y.-J."/>
            <person name="Vandenbussche F."/>
            <person name="Braeken M."/>
            <person name="Weltjens I."/>
            <person name="Voet M."/>
            <person name="Bastiaens I."/>
            <person name="Aert R."/>
            <person name="Defoor E."/>
            <person name="Weitzenegger T."/>
            <person name="Bothe G."/>
            <person name="Ramsperger U."/>
            <person name="Hilbert H."/>
            <person name="Braun M."/>
            <person name="Holzer E."/>
            <person name="Brandt A."/>
            <person name="Peters S."/>
            <person name="van Staveren M."/>
            <person name="Dirkse W."/>
            <person name="Mooijman P."/>
            <person name="Klein Lankhorst R."/>
            <person name="Rose M."/>
            <person name="Hauf J."/>
            <person name="Koetter P."/>
            <person name="Berneiser S."/>
            <person name="Hempel S."/>
            <person name="Feldpausch M."/>
            <person name="Lamberth S."/>
            <person name="Van den Daele H."/>
            <person name="De Keyser A."/>
            <person name="Buysshaert C."/>
            <person name="Gielen J."/>
            <person name="Villarroel R."/>
            <person name="De Clercq R."/>
            <person name="van Montagu M."/>
            <person name="Rogers J."/>
            <person name="Cronin A."/>
            <person name="Quail M.A."/>
            <person name="Bray-Allen S."/>
            <person name="Clark L."/>
            <person name="Doggett J."/>
            <person name="Hall S."/>
            <person name="Kay M."/>
            <person name="Lennard N."/>
            <person name="McLay K."/>
            <person name="Mayes R."/>
            <person name="Pettett A."/>
            <person name="Rajandream M.A."/>
            <person name="Lyne M."/>
            <person name="Benes V."/>
            <person name="Rechmann S."/>
            <person name="Borkova D."/>
            <person name="Bloecker H."/>
            <person name="Scharfe M."/>
            <person name="Grimm M."/>
            <person name="Loehnert T.-H."/>
            <person name="Dose S."/>
            <person name="de Haan M."/>
            <person name="Maarse A.C."/>
            <person name="Schaefer M."/>
            <person name="Mueller-Auer S."/>
            <person name="Gabel C."/>
            <person name="Fuchs M."/>
            <person name="Fartmann B."/>
            <person name="Granderath K."/>
            <person name="Dauner D."/>
            <person name="Herzl A."/>
            <person name="Neumann S."/>
            <person name="Argiriou A."/>
            <person name="Vitale D."/>
            <person name="Liguori R."/>
            <person name="Piravandi E."/>
            <person name="Massenet O."/>
            <person name="Quigley F."/>
            <person name="Clabauld G."/>
            <person name="Muendlein A."/>
            <person name="Felber R."/>
            <person name="Schnabl S."/>
            <person name="Hiller R."/>
            <person name="Schmidt W."/>
            <person name="Lecharny A."/>
            <person name="Aubourg S."/>
            <person name="Chefdor F."/>
            <person name="Cooke R."/>
            <person name="Berger C."/>
            <person name="Monfort A."/>
            <person name="Casacuberta E."/>
            <person name="Gibbons T."/>
            <person name="Weber N."/>
            <person name="Vandenbol M."/>
            <person name="Bargues M."/>
            <person name="Terol J."/>
            <person name="Torres A."/>
            <person name="Perez-Perez A."/>
            <person name="Purnelle B."/>
            <person name="Bent E."/>
            <person name="Johnson S."/>
            <person name="Tacon D."/>
            <person name="Jesse T."/>
            <person name="Heijnen L."/>
            <person name="Schwarz S."/>
            <person name="Scholler P."/>
            <person name="Heber S."/>
            <person name="Francs P."/>
            <person name="Bielke C."/>
            <person name="Frishman D."/>
            <person name="Haase D."/>
            <person name="Lemcke K."/>
            <person name="Mewes H.-W."/>
            <person name="Stocker S."/>
            <person name="Zaccaria P."/>
            <person name="Bevan M."/>
            <person name="Wilson R.K."/>
            <person name="de la Bastide M."/>
            <person name="Habermann K."/>
            <person name="Parnell L."/>
            <person name="Dedhia N."/>
            <person name="Gnoj L."/>
            <person name="Schutz K."/>
            <person name="Huang E."/>
            <person name="Spiegel L."/>
            <person name="Sekhon M."/>
            <person name="Murray J."/>
            <person name="Sheet P."/>
            <person name="Cordes M."/>
            <person name="Abu-Threideh J."/>
            <person name="Stoneking T."/>
            <person name="Kalicki J."/>
            <person name="Graves T."/>
            <person name="Harmon G."/>
            <person name="Edwards J."/>
            <person name="Latreille P."/>
            <person name="Courtney L."/>
            <person name="Cloud J."/>
            <person name="Abbott A."/>
            <person name="Scott K."/>
            <person name="Johnson D."/>
            <person name="Minx P."/>
            <person name="Bentley D."/>
            <person name="Fulton B."/>
            <person name="Miller N."/>
            <person name="Greco T."/>
            <person name="Kemp K."/>
            <person name="Kramer J."/>
            <person name="Fulton L."/>
            <person name="Mardis E."/>
            <person name="Dante M."/>
            <person name="Pepin K."/>
            <person name="Hillier L.W."/>
            <person name="Nelson J."/>
            <person name="Spieth J."/>
            <person name="Ryan E."/>
            <person name="Andrews S."/>
            <person name="Geisel C."/>
            <person name="Layman D."/>
            <person name="Du H."/>
            <person name="Ali J."/>
            <person name="Berghoff A."/>
            <person name="Jones K."/>
            <person name="Drone K."/>
            <person name="Cotton M."/>
            <person name="Joshu C."/>
            <person name="Antonoiu B."/>
            <person name="Zidanic M."/>
            <person name="Strong C."/>
            <person name="Sun H."/>
            <person name="Lamar B."/>
            <person name="Yordan C."/>
            <person name="Ma P."/>
            <person name="Zhong J."/>
            <person name="Preston R."/>
            <person name="Vil D."/>
            <person name="Shekher M."/>
            <person name="Matero A."/>
            <person name="Shah R."/>
            <person name="Swaby I.K."/>
            <person name="O'Shaughnessy A."/>
            <person name="Rodriguez M."/>
            <person name="Hoffman J."/>
            <person name="Till S."/>
            <person name="Granat S."/>
            <person name="Shohdy N."/>
            <person name="Hasegawa A."/>
            <person name="Hameed A."/>
            <person name="Lodhi M."/>
            <person name="Johnson A."/>
            <person name="Chen E."/>
            <person name="Marra M.A."/>
            <person name="Martienssen R."/>
            <person name="McCombie W.R."/>
        </authorList>
    </citation>
    <scope>NUCLEOTIDE SEQUENCE [LARGE SCALE GENOMIC DNA]</scope>
    <source>
        <strain>cv. Columbia</strain>
    </source>
</reference>
<reference key="2">
    <citation type="journal article" date="2017" name="Plant J.">
        <title>Araport11: a complete reannotation of the Arabidopsis thaliana reference genome.</title>
        <authorList>
            <person name="Cheng C.Y."/>
            <person name="Krishnakumar V."/>
            <person name="Chan A.P."/>
            <person name="Thibaud-Nissen F."/>
            <person name="Schobel S."/>
            <person name="Town C.D."/>
        </authorList>
    </citation>
    <scope>GENOME REANNOTATION</scope>
    <source>
        <strain>cv. Columbia</strain>
    </source>
</reference>
<reference key="3">
    <citation type="submission" date="2006-07" db="EMBL/GenBank/DDBJ databases">
        <title>Large-scale analysis of RIKEN Arabidopsis full-length (RAFL) cDNAs.</title>
        <authorList>
            <person name="Totoki Y."/>
            <person name="Seki M."/>
            <person name="Ishida J."/>
            <person name="Nakajima M."/>
            <person name="Enju A."/>
            <person name="Kamiya A."/>
            <person name="Narusaka M."/>
            <person name="Shin-i T."/>
            <person name="Nakagawa M."/>
            <person name="Sakamoto N."/>
            <person name="Oishi K."/>
            <person name="Kohara Y."/>
            <person name="Kobayashi M."/>
            <person name="Toyoda A."/>
            <person name="Sakaki Y."/>
            <person name="Sakurai T."/>
            <person name="Iida K."/>
            <person name="Akiyama K."/>
            <person name="Satou M."/>
            <person name="Toyoda T."/>
            <person name="Konagaya A."/>
            <person name="Carninci P."/>
            <person name="Kawai J."/>
            <person name="Hayashizaki Y."/>
            <person name="Shinozaki K."/>
        </authorList>
    </citation>
    <scope>NUCLEOTIDE SEQUENCE [LARGE SCALE MRNA]</scope>
    <source>
        <strain>cv. Columbia</strain>
    </source>
</reference>
<reference key="4">
    <citation type="journal article" date="2008" name="Plant Physiol.">
        <title>Galactinol and raffinose constitute a novel function to protect plants from oxidative damage.</title>
        <authorList>
            <person name="Nishizawa A."/>
            <person name="Yabuta Y."/>
            <person name="Shigeoka S."/>
        </authorList>
    </citation>
    <scope>INDUCTION BY OXIDATIVE STRESS</scope>
    <scope>GENE FAMILY</scope>
    <scope>NOMENCLATURE</scope>
</reference>
<keyword id="KW-0119">Carbohydrate metabolism</keyword>
<keyword id="KW-0328">Glycosyltransferase</keyword>
<keyword id="KW-0597">Phosphoprotein</keyword>
<keyword id="KW-1185">Reference proteome</keyword>
<keyword id="KW-0808">Transferase</keyword>
<feature type="chain" id="PRO_0000389257" description="Probable galactinol--sucrose galactosyltransferase 4">
    <location>
        <begin position="1"/>
        <end position="876"/>
    </location>
</feature>
<feature type="modified residue" description="Phosphoserine" evidence="2">
    <location>
        <position position="7"/>
    </location>
</feature>
<feature type="modified residue" description="Phosphoserine" evidence="2">
    <location>
        <position position="9"/>
    </location>
</feature>
<feature type="sequence conflict" description="In Ref. 3; BAF00996." evidence="4" ref="3">
    <original>A</original>
    <variation>V</variation>
    <location>
        <position position="792"/>
    </location>
</feature>
<accession>Q9SYJ4</accession>
<accession>Q0WPF3</accession>
<protein>
    <recommendedName>
        <fullName>Probable galactinol--sucrose galactosyltransferase 4</fullName>
        <ecNumber>2.4.1.82</ecNumber>
    </recommendedName>
    <alternativeName>
        <fullName>Raffinose synthase 4</fullName>
    </alternativeName>
</protein>
<organism>
    <name type="scientific">Arabidopsis thaliana</name>
    <name type="common">Mouse-ear cress</name>
    <dbReference type="NCBI Taxonomy" id="3702"/>
    <lineage>
        <taxon>Eukaryota</taxon>
        <taxon>Viridiplantae</taxon>
        <taxon>Streptophyta</taxon>
        <taxon>Embryophyta</taxon>
        <taxon>Tracheophyta</taxon>
        <taxon>Spermatophyta</taxon>
        <taxon>Magnoliopsida</taxon>
        <taxon>eudicotyledons</taxon>
        <taxon>Gunneridae</taxon>
        <taxon>Pentapetalae</taxon>
        <taxon>rosids</taxon>
        <taxon>malvids</taxon>
        <taxon>Brassicales</taxon>
        <taxon>Brassicaceae</taxon>
        <taxon>Camelineae</taxon>
        <taxon>Arabidopsis</taxon>
    </lineage>
</organism>
<sequence length="876" mass="98012">MAPLHESLSSINDVIESKPLFVPITKPILQPNSFNLSEGSLCAKDSTPILFDVPQNVTFTPFSSHSISTDAPLPILLRVQANAHKGGFLGFTKESPSDRLTNSLGRFEDREFLSLFRFKMWWSTAWIGKSGSDLQAETQWVMLKIPEIDSYVAIIPTIEGAFRASLTPGEKGNVLICAESGSTKVKESSFKSIAYIHICDNPYNLMKEAFSALRVHMNTFKLLEEKKLPKIVDKFGWCTWDACYLTVDPATIWTGVKEFEDGGVCPKFVIIDDGWQSINFDGDELDKDAENLVLGGEQMTARLTSFKECKKFRNYKGGSFITSDASHFNPLKPKMLIYKATERIQAIILRRKLVKESGEQDLTELDEKIKILSEELNAMFDEVEKEESLGSDDVSGSGMAAFTKDLRLRFKSLDDIYVWHALCGAWNGVRPETMMDLKAKVAPFELSPSLGATMADLAVDKVVEAGIGLVHPSKAHEFYDSMHSYLASVGVTGAKIDVFQTLESLAEEHGGRVELAKAYYDGLTESMIKNFNGTDVIASMQQCNEFFFLATKQISIGRVGDDFWWQDPYGDPQGVYWLQGVHMIHCSYNSIWMGQMIQPDWDMFQSDHVCAEYHAASRAICGGPVYLSDHLGKASHNFDLIKKLAFFDGTIPRCVHYALPTRDSLFKNPLFDKESILKIFNFNKFGGVIGTFNCQGAGWSPEEHRFKGYKECYTTVSGTVHVSDIEWDQNPEAAGSQVTYTGDYLVYKQQSEEILFMNSKSEAMKITLEPSAFDLLSFVPVTELVSSGVRFAPLGLINMFNCVGTVQDMKVTGDNSIRVDVKGEGRFMAYSSSAPVKCYLNDKEAEFKWEEETGKLSFFVPWVEESGGISHLSFTF</sequence>
<proteinExistence type="evidence at transcript level"/>